<proteinExistence type="inferred from homology"/>
<organism>
    <name type="scientific">Sinorhizobium fredii (strain NBRC 101917 / NGR234)</name>
    <dbReference type="NCBI Taxonomy" id="394"/>
    <lineage>
        <taxon>Bacteria</taxon>
        <taxon>Pseudomonadati</taxon>
        <taxon>Pseudomonadota</taxon>
        <taxon>Alphaproteobacteria</taxon>
        <taxon>Hyphomicrobiales</taxon>
        <taxon>Rhizobiaceae</taxon>
        <taxon>Sinorhizobium/Ensifer group</taxon>
        <taxon>Sinorhizobium</taxon>
    </lineage>
</organism>
<sequence>MTISRRDLFKAGLAAGAALSVPSLLRAQTAVAADKTVRMALENLSVFDPVATTAGISQTHALAIYDTLFSADSQSQPHPQMVGNWGVSDDKKTYTFELRDGLGWHDGTPVTAADCVASIRRWAQVGSGGQILMSRASDISKKDDRTFVISLKEPLGALPSILAFEGPFIMREKDAGLPPTEQVTANIGSGPFKFNHDLAKPGASFTYDRNEKYVPRKEPPDGMAGGKTVYVDRVVWDIGVLADPQTSVAALQTGEIDFLYRPPIDLLPLIESDPNLKLEALNRAGVDMTLRMNCLQAPFNSVKARQALLHLVDQEAVLRAAYGNPQYFKPVTSMFGNTAAVTNDENTGWFKPGGDPEKAKQLFKEAGYAGEKIVILQATDWAEQSNASQVVAAKLREIGVNAELAPSDWGGLVSRRSKRDSVDNGGWSIFITDQSEATRANVFTDISLAMNGEKAWYGWPKNDEYEALRAKWLTLETLDERKALAREMQKLWWDYVPEVPLGQNIVPSAYSKTLTGLIPATLPLMWNMQKA</sequence>
<name>Y4TO_SINFN</name>
<feature type="signal peptide" description="Tat-type signal" evidence="1">
    <location>
        <begin position="1"/>
        <end position="32"/>
    </location>
</feature>
<feature type="chain" id="PRO_0000031809" description="Probable peptide ABC transporter periplasmic-binding protein y4tO">
    <location>
        <begin position="33"/>
        <end position="531"/>
    </location>
</feature>
<gene>
    <name type="ordered locus">NGR_a01440</name>
    <name type="ORF">y4tO</name>
</gene>
<geneLocation type="plasmid">
    <name>sym pNGR234a</name>
</geneLocation>
<protein>
    <recommendedName>
        <fullName>Probable peptide ABC transporter periplasmic-binding protein y4tO</fullName>
    </recommendedName>
</protein>
<reference key="1">
    <citation type="journal article" date="1997" name="Nature">
        <title>Molecular basis of symbiosis between Rhizobium and legumes.</title>
        <authorList>
            <person name="Freiberg C.A."/>
            <person name="Fellay R."/>
            <person name="Bairoch A."/>
            <person name="Broughton W.J."/>
            <person name="Rosenthal A."/>
            <person name="Perret X."/>
        </authorList>
    </citation>
    <scope>NUCLEOTIDE SEQUENCE [LARGE SCALE GENOMIC DNA]</scope>
    <source>
        <strain>NBRC 101917 / NGR234</strain>
    </source>
</reference>
<reference key="2">
    <citation type="journal article" date="2009" name="Appl. Environ. Microbiol.">
        <title>Rhizobium sp. strain NGR234 possesses a remarkable number of secretion systems.</title>
        <authorList>
            <person name="Schmeisser C."/>
            <person name="Liesegang H."/>
            <person name="Krysciak D."/>
            <person name="Bakkou N."/>
            <person name="Le Quere A."/>
            <person name="Wollherr A."/>
            <person name="Heinemeyer I."/>
            <person name="Morgenstern B."/>
            <person name="Pommerening-Roeser A."/>
            <person name="Flores M."/>
            <person name="Palacios R."/>
            <person name="Brenner S."/>
            <person name="Gottschalk G."/>
            <person name="Schmitz R.A."/>
            <person name="Broughton W.J."/>
            <person name="Perret X."/>
            <person name="Strittmatter A.W."/>
            <person name="Streit W.R."/>
        </authorList>
    </citation>
    <scope>NUCLEOTIDE SEQUENCE [LARGE SCALE GENOMIC DNA]</scope>
    <source>
        <strain>NBRC 101917 / NGR234</strain>
    </source>
</reference>
<comment type="function">
    <text>Probably part of the binding-protein-dependent transport system y4tOPQRS for a peptide.</text>
</comment>
<comment type="subcellular location">
    <subcellularLocation>
        <location evidence="2">Periplasm</location>
    </subcellularLocation>
</comment>
<comment type="PTM">
    <text>Predicted to be exported by the Tat system. The position of the signal peptide cleavage has not been experimentally proven.</text>
</comment>
<comment type="similarity">
    <text evidence="2">Belongs to the bacterial solute-binding protein 5 family.</text>
</comment>
<accession>P55669</accession>
<evidence type="ECO:0000255" key="1">
    <source>
        <dbReference type="PROSITE-ProRule" id="PRU00648"/>
    </source>
</evidence>
<evidence type="ECO:0000305" key="2"/>
<dbReference type="EMBL" id="U00090">
    <property type="protein sequence ID" value="AAB91868.1"/>
    <property type="molecule type" value="Genomic_DNA"/>
</dbReference>
<dbReference type="RefSeq" id="NP_444081.1">
    <property type="nucleotide sequence ID" value="NC_000914.2"/>
</dbReference>
<dbReference type="RefSeq" id="WP_010875182.1">
    <property type="nucleotide sequence ID" value="NC_000914.2"/>
</dbReference>
<dbReference type="SMR" id="P55669"/>
<dbReference type="KEGG" id="rhi:NGR_a01440"/>
<dbReference type="PATRIC" id="fig|394.7.peg.130"/>
<dbReference type="eggNOG" id="COG0747">
    <property type="taxonomic scope" value="Bacteria"/>
</dbReference>
<dbReference type="HOGENOM" id="CLU_017028_7_1_5"/>
<dbReference type="OrthoDB" id="9803988at2"/>
<dbReference type="Proteomes" id="UP000001054">
    <property type="component" value="Plasmid pNGR234a"/>
</dbReference>
<dbReference type="GO" id="GO:0043190">
    <property type="term" value="C:ATP-binding cassette (ABC) transporter complex"/>
    <property type="evidence" value="ECO:0007669"/>
    <property type="project" value="InterPro"/>
</dbReference>
<dbReference type="GO" id="GO:0030288">
    <property type="term" value="C:outer membrane-bounded periplasmic space"/>
    <property type="evidence" value="ECO:0007669"/>
    <property type="project" value="UniProtKB-ARBA"/>
</dbReference>
<dbReference type="GO" id="GO:1904680">
    <property type="term" value="F:peptide transmembrane transporter activity"/>
    <property type="evidence" value="ECO:0007669"/>
    <property type="project" value="TreeGrafter"/>
</dbReference>
<dbReference type="GO" id="GO:0015833">
    <property type="term" value="P:peptide transport"/>
    <property type="evidence" value="ECO:0007669"/>
    <property type="project" value="TreeGrafter"/>
</dbReference>
<dbReference type="CDD" id="cd08502">
    <property type="entry name" value="PBP2_NikA_DppA_OppA_like_16"/>
    <property type="match status" value="1"/>
</dbReference>
<dbReference type="Gene3D" id="3.90.76.10">
    <property type="entry name" value="Dipeptide-binding Protein, Domain 1"/>
    <property type="match status" value="1"/>
</dbReference>
<dbReference type="Gene3D" id="3.10.105.10">
    <property type="entry name" value="Dipeptide-binding Protein, Domain 3"/>
    <property type="match status" value="1"/>
</dbReference>
<dbReference type="Gene3D" id="3.40.190.10">
    <property type="entry name" value="Periplasmic binding protein-like II"/>
    <property type="match status" value="1"/>
</dbReference>
<dbReference type="InterPro" id="IPR030678">
    <property type="entry name" value="Peptide/Ni-bd"/>
</dbReference>
<dbReference type="InterPro" id="IPR039424">
    <property type="entry name" value="SBP_5"/>
</dbReference>
<dbReference type="InterPro" id="IPR023765">
    <property type="entry name" value="SBP_5_CS"/>
</dbReference>
<dbReference type="InterPro" id="IPR000914">
    <property type="entry name" value="SBP_5_dom"/>
</dbReference>
<dbReference type="InterPro" id="IPR006311">
    <property type="entry name" value="TAT_signal"/>
</dbReference>
<dbReference type="PANTHER" id="PTHR30290:SF38">
    <property type="entry name" value="D,D-DIPEPTIDE-BINDING PERIPLASMIC PROTEIN DDPA-RELATED"/>
    <property type="match status" value="1"/>
</dbReference>
<dbReference type="PANTHER" id="PTHR30290">
    <property type="entry name" value="PERIPLASMIC BINDING COMPONENT OF ABC TRANSPORTER"/>
    <property type="match status" value="1"/>
</dbReference>
<dbReference type="Pfam" id="PF00496">
    <property type="entry name" value="SBP_bac_5"/>
    <property type="match status" value="1"/>
</dbReference>
<dbReference type="PIRSF" id="PIRSF002741">
    <property type="entry name" value="MppA"/>
    <property type="match status" value="1"/>
</dbReference>
<dbReference type="SUPFAM" id="SSF53850">
    <property type="entry name" value="Periplasmic binding protein-like II"/>
    <property type="match status" value="1"/>
</dbReference>
<dbReference type="PROSITE" id="PS01040">
    <property type="entry name" value="SBP_BACTERIAL_5"/>
    <property type="match status" value="1"/>
</dbReference>
<dbReference type="PROSITE" id="PS51318">
    <property type="entry name" value="TAT"/>
    <property type="match status" value="1"/>
</dbReference>
<keyword id="KW-0574">Periplasm</keyword>
<keyword id="KW-0614">Plasmid</keyword>
<keyword id="KW-1185">Reference proteome</keyword>
<keyword id="KW-0732">Signal</keyword>
<keyword id="KW-0813">Transport</keyword>